<sequence length="852" mass="95967">MNGHFAAVGNGPTAQQYEHGIQVIDEDKAFNTNLNDYLGETRVAEAGFNYHLISVFGSQSTGKSTLLNHLFKTEFSVMSESARRQTTKGIWMSKNKRAGANGDAATMADNILVMDVEGTDGRERGEDQDFERKSALFALATSEVLIVNIWEHQIGLYQGANMGLLKTVFEVNLQLFLKDRQSQTRSLLFFVIRDHVGNTPLANLRDTLVQDLTKIWSTLSKPQGLEDSKIEDYFDFAFAALPHKILQPEKFLEEADKLSTRFTTGHRSAKDQEFVGGVFLPEYHRRIPADGLSVYAEGVWDQIVNNKDLDLPTQQELLAQFRCDEISREVFVGFDSVIVPLEEQQAEATRLGKATVLPDLGVTGAGTREKCVKAFETQASRYHKGVYSVKRGELESKIDARLKALYQTQLSAAHKSGVAAFSDAVTNAVKAGQKAGGYEFAEIVDKQKKKTLEFFKKEAQSLLIQGVAWTNFKPQYRLFEKELDEVSARLRKEEMRRLAIRVERWVKSRLGDSIGVEFNKLGSGRGGSGAPENGEKPATEKDLWDRIWNTFSGIIREAETRFADRAKSFEASPEEVEVGLWRLRRKSWVALREKIEEEMMESNILMKLRENFEDKFRYDEEGVPRIWRPTDDIEGIYTRARESTLGLIPLLARFRLAETYAPPDLPTFVGPQPAGAEPEDEEDLAPIGGVDEEEGKSLEEEMTVLSESKRQDLVVRFKKMADGVYVEAKRSAIGGITQVPLYFYIVLLIFGWNEIVMVLRNPMLFMLLLVMGGGTYVAYTLNLLGPMMQMANAASNQAVEIGKEKLRDFLENNQTMRQAIAMPPRSQDNGIGMDRLDSRGKKAQEVEEDDDI</sequence>
<organism>
    <name type="scientific">Chaetomium globosum (strain ATCC 6205 / CBS 148.51 / DSM 1962 / NBRC 6347 / NRRL 1970)</name>
    <name type="common">Soil fungus</name>
    <dbReference type="NCBI Taxonomy" id="306901"/>
    <lineage>
        <taxon>Eukaryota</taxon>
        <taxon>Fungi</taxon>
        <taxon>Dikarya</taxon>
        <taxon>Ascomycota</taxon>
        <taxon>Pezizomycotina</taxon>
        <taxon>Sordariomycetes</taxon>
        <taxon>Sordariomycetidae</taxon>
        <taxon>Sordariales</taxon>
        <taxon>Chaetomiaceae</taxon>
        <taxon>Chaetomium</taxon>
    </lineage>
</organism>
<dbReference type="EC" id="3.6.5.-" evidence="1"/>
<dbReference type="EMBL" id="CH408033">
    <property type="protein sequence ID" value="EAQ87014.1"/>
    <property type="molecule type" value="Genomic_DNA"/>
</dbReference>
<dbReference type="RefSeq" id="XP_001225923.1">
    <property type="nucleotide sequence ID" value="XM_001225922.1"/>
</dbReference>
<dbReference type="SMR" id="Q2GUT7"/>
<dbReference type="FunCoup" id="Q2GUT7">
    <property type="interactions" value="54"/>
</dbReference>
<dbReference type="STRING" id="306901.Q2GUT7"/>
<dbReference type="GeneID" id="4394192"/>
<dbReference type="VEuPathDB" id="FungiDB:CHGG_08267"/>
<dbReference type="eggNOG" id="KOG2203">
    <property type="taxonomic scope" value="Eukaryota"/>
</dbReference>
<dbReference type="HOGENOM" id="CLU_011270_0_0_1"/>
<dbReference type="InParanoid" id="Q2GUT7"/>
<dbReference type="OrthoDB" id="1597724at2759"/>
<dbReference type="Proteomes" id="UP000001056">
    <property type="component" value="Unassembled WGS sequence"/>
</dbReference>
<dbReference type="GO" id="GO:0005789">
    <property type="term" value="C:endoplasmic reticulum membrane"/>
    <property type="evidence" value="ECO:0007669"/>
    <property type="project" value="UniProtKB-SubCell"/>
</dbReference>
<dbReference type="GO" id="GO:0005525">
    <property type="term" value="F:GTP binding"/>
    <property type="evidence" value="ECO:0007669"/>
    <property type="project" value="UniProtKB-UniRule"/>
</dbReference>
<dbReference type="GO" id="GO:0003924">
    <property type="term" value="F:GTPase activity"/>
    <property type="evidence" value="ECO:0007669"/>
    <property type="project" value="UniProtKB-UniRule"/>
</dbReference>
<dbReference type="GO" id="GO:0016320">
    <property type="term" value="P:endoplasmic reticulum membrane fusion"/>
    <property type="evidence" value="ECO:0007669"/>
    <property type="project" value="TreeGrafter"/>
</dbReference>
<dbReference type="CDD" id="cd01851">
    <property type="entry name" value="GBP"/>
    <property type="match status" value="1"/>
</dbReference>
<dbReference type="FunFam" id="3.40.50.300:FF:000727">
    <property type="entry name" value="Protein SEY1 homolog"/>
    <property type="match status" value="1"/>
</dbReference>
<dbReference type="Gene3D" id="3.40.50.300">
    <property type="entry name" value="P-loop containing nucleotide triphosphate hydrolases"/>
    <property type="match status" value="1"/>
</dbReference>
<dbReference type="HAMAP" id="MF_03109">
    <property type="entry name" value="Sey1"/>
    <property type="match status" value="1"/>
</dbReference>
<dbReference type="InterPro" id="IPR030386">
    <property type="entry name" value="G_GB1_RHD3_dom"/>
</dbReference>
<dbReference type="InterPro" id="IPR027417">
    <property type="entry name" value="P-loop_NTPase"/>
</dbReference>
<dbReference type="InterPro" id="IPR008803">
    <property type="entry name" value="RHD3/Sey1"/>
</dbReference>
<dbReference type="InterPro" id="IPR046758">
    <property type="entry name" value="Sey1/RHD3-like_3HB"/>
</dbReference>
<dbReference type="PANTHER" id="PTHR45923">
    <property type="entry name" value="PROTEIN SEY1"/>
    <property type="match status" value="1"/>
</dbReference>
<dbReference type="PANTHER" id="PTHR45923:SF2">
    <property type="entry name" value="PROTEIN SEY1"/>
    <property type="match status" value="1"/>
</dbReference>
<dbReference type="Pfam" id="PF05879">
    <property type="entry name" value="RHD3_GTPase"/>
    <property type="match status" value="1"/>
</dbReference>
<dbReference type="Pfam" id="PF20428">
    <property type="entry name" value="Sey1_3HB"/>
    <property type="match status" value="1"/>
</dbReference>
<dbReference type="SUPFAM" id="SSF52540">
    <property type="entry name" value="P-loop containing nucleoside triphosphate hydrolases"/>
    <property type="match status" value="1"/>
</dbReference>
<dbReference type="PROSITE" id="PS51715">
    <property type="entry name" value="G_GB1_RHD3"/>
    <property type="match status" value="1"/>
</dbReference>
<comment type="function">
    <text evidence="1">Cooperates with the reticulon proteins and tubule-shaping DP1 family proteins to generate and maintain the structure of the tubular endoplasmic reticulum network. Has GTPase activity, which is required for its function in ER organization.</text>
</comment>
<comment type="subcellular location">
    <subcellularLocation>
        <location evidence="1">Endoplasmic reticulum membrane</location>
        <topology evidence="1">Multi-pass membrane protein</topology>
    </subcellularLocation>
    <text evidence="1">Enriched in the cortical ER. Concentrated in punctae along the ER tubules.</text>
</comment>
<comment type="similarity">
    <text evidence="2">Belongs to the TRAFAC class dynamin-like GTPase superfamily. GB1/RHD3 GTPase family. RHD3 subfamily.</text>
</comment>
<proteinExistence type="inferred from homology"/>
<feature type="chain" id="PRO_0000384979" description="Protein SEY1">
    <location>
        <begin position="1"/>
        <end position="852"/>
    </location>
</feature>
<feature type="topological domain" description="Cytoplasmic" evidence="1">
    <location>
        <begin position="1"/>
        <end position="738"/>
    </location>
</feature>
<feature type="transmembrane region" description="Helical" evidence="1">
    <location>
        <begin position="739"/>
        <end position="759"/>
    </location>
</feature>
<feature type="topological domain" description="Lumenal" evidence="1">
    <location>
        <begin position="760"/>
        <end position="762"/>
    </location>
</feature>
<feature type="transmembrane region" description="Helical" evidence="1">
    <location>
        <begin position="763"/>
        <end position="783"/>
    </location>
</feature>
<feature type="topological domain" description="Cytoplasmic" evidence="1">
    <location>
        <begin position="784"/>
        <end position="852"/>
    </location>
</feature>
<feature type="domain" description="GB1/RHD3-type G" evidence="2">
    <location>
        <begin position="47"/>
        <end position="283"/>
    </location>
</feature>
<feature type="region of interest" description="Disordered" evidence="3">
    <location>
        <begin position="825"/>
        <end position="852"/>
    </location>
</feature>
<feature type="coiled-coil region" evidence="1">
    <location>
        <begin position="475"/>
        <end position="500"/>
    </location>
</feature>
<feature type="compositionally biased region" description="Basic and acidic residues" evidence="3">
    <location>
        <begin position="834"/>
        <end position="845"/>
    </location>
</feature>
<feature type="binding site" evidence="1">
    <location>
        <begin position="57"/>
        <end position="64"/>
    </location>
    <ligand>
        <name>GTP</name>
        <dbReference type="ChEBI" id="CHEBI:37565"/>
    </ligand>
</feature>
<keyword id="KW-0175">Coiled coil</keyword>
<keyword id="KW-0256">Endoplasmic reticulum</keyword>
<keyword id="KW-0342">GTP-binding</keyword>
<keyword id="KW-0378">Hydrolase</keyword>
<keyword id="KW-0472">Membrane</keyword>
<keyword id="KW-0547">Nucleotide-binding</keyword>
<keyword id="KW-1185">Reference proteome</keyword>
<keyword id="KW-0812">Transmembrane</keyword>
<keyword id="KW-1133">Transmembrane helix</keyword>
<gene>
    <name evidence="1" type="primary">SEY1</name>
    <name type="ORF">CHGG_08267</name>
</gene>
<reference key="1">
    <citation type="journal article" date="2015" name="Genome Announc.">
        <title>Draft genome sequence of the cellulolytic fungus Chaetomium globosum.</title>
        <authorList>
            <person name="Cuomo C.A."/>
            <person name="Untereiner W.A."/>
            <person name="Ma L.-J."/>
            <person name="Grabherr M."/>
            <person name="Birren B.W."/>
        </authorList>
    </citation>
    <scope>NUCLEOTIDE SEQUENCE [LARGE SCALE GENOMIC DNA]</scope>
    <source>
        <strain>ATCC 6205 / CBS 148.51 / DSM 1962 / NBRC 6347 / NRRL 1970</strain>
    </source>
</reference>
<name>SEY1_CHAGB</name>
<accession>Q2GUT7</accession>
<protein>
    <recommendedName>
        <fullName evidence="1">Protein SEY1</fullName>
        <ecNumber evidence="1">3.6.5.-</ecNumber>
    </recommendedName>
</protein>
<evidence type="ECO:0000255" key="1">
    <source>
        <dbReference type="HAMAP-Rule" id="MF_03109"/>
    </source>
</evidence>
<evidence type="ECO:0000255" key="2">
    <source>
        <dbReference type="PROSITE-ProRule" id="PRU01052"/>
    </source>
</evidence>
<evidence type="ECO:0000256" key="3">
    <source>
        <dbReference type="SAM" id="MobiDB-lite"/>
    </source>
</evidence>